<dbReference type="EC" id="2.5.1.-" evidence="1"/>
<dbReference type="EC" id="2.5.1.1" evidence="1"/>
<dbReference type="EC" id="2.5.1.29" evidence="1"/>
<dbReference type="EC" id="2.5.1.10" evidence="1"/>
<dbReference type="EMBL" id="HF679027">
    <property type="protein sequence ID" value="CCT69172.1"/>
    <property type="molecule type" value="Genomic_DNA"/>
</dbReference>
<dbReference type="SMR" id="S0E627"/>
<dbReference type="STRING" id="1279085.S0E627"/>
<dbReference type="EnsemblFungi" id="CCT69172">
    <property type="protein sequence ID" value="CCT69172"/>
    <property type="gene ID" value="FFUJ_14335"/>
</dbReference>
<dbReference type="VEuPathDB" id="FungiDB:FFUJ_14335"/>
<dbReference type="HOGENOM" id="CLU_014015_6_0_1"/>
<dbReference type="UniPathway" id="UPA00390"/>
<dbReference type="Proteomes" id="UP000016800">
    <property type="component" value="Chromosome 5"/>
</dbReference>
<dbReference type="GO" id="GO:0004337">
    <property type="term" value="F:(2E,6E)-farnesyl diphosphate synthase activity"/>
    <property type="evidence" value="ECO:0007669"/>
    <property type="project" value="UniProtKB-EC"/>
</dbReference>
<dbReference type="GO" id="GO:0004161">
    <property type="term" value="F:dimethylallyltranstransferase activity"/>
    <property type="evidence" value="ECO:0007669"/>
    <property type="project" value="UniProtKB-EC"/>
</dbReference>
<dbReference type="GO" id="GO:0004311">
    <property type="term" value="F:geranylgeranyl diphosphate synthase activity"/>
    <property type="evidence" value="ECO:0007669"/>
    <property type="project" value="UniProtKB-EC"/>
</dbReference>
<dbReference type="GO" id="GO:0046872">
    <property type="term" value="F:metal ion binding"/>
    <property type="evidence" value="ECO:0007669"/>
    <property type="project" value="UniProtKB-KW"/>
</dbReference>
<dbReference type="GO" id="GO:0046165">
    <property type="term" value="P:alcohol biosynthetic process"/>
    <property type="evidence" value="ECO:0007669"/>
    <property type="project" value="UniProtKB-ARBA"/>
</dbReference>
<dbReference type="GO" id="GO:0009686">
    <property type="term" value="P:gibberellin biosynthetic process"/>
    <property type="evidence" value="ECO:0007669"/>
    <property type="project" value="UniProtKB-UniPathway"/>
</dbReference>
<dbReference type="GO" id="GO:0043386">
    <property type="term" value="P:mycotoxin biosynthetic process"/>
    <property type="evidence" value="ECO:0007669"/>
    <property type="project" value="UniProtKB-ARBA"/>
</dbReference>
<dbReference type="CDD" id="cd00685">
    <property type="entry name" value="Trans_IPPS_HT"/>
    <property type="match status" value="1"/>
</dbReference>
<dbReference type="Gene3D" id="1.10.600.10">
    <property type="entry name" value="Farnesyl Diphosphate Synthase"/>
    <property type="match status" value="1"/>
</dbReference>
<dbReference type="InterPro" id="IPR008949">
    <property type="entry name" value="Isoprenoid_synthase_dom_sf"/>
</dbReference>
<dbReference type="InterPro" id="IPR000092">
    <property type="entry name" value="Polyprenyl_synt"/>
</dbReference>
<dbReference type="InterPro" id="IPR033749">
    <property type="entry name" value="Polyprenyl_synt_CS"/>
</dbReference>
<dbReference type="PANTHER" id="PTHR12001">
    <property type="entry name" value="GERANYLGERANYL PYROPHOSPHATE SYNTHASE"/>
    <property type="match status" value="1"/>
</dbReference>
<dbReference type="PANTHER" id="PTHR12001:SF44">
    <property type="entry name" value="GERANYLGERANYL PYROPHOSPHATE SYNTHASE"/>
    <property type="match status" value="1"/>
</dbReference>
<dbReference type="Pfam" id="PF00348">
    <property type="entry name" value="polyprenyl_synt"/>
    <property type="match status" value="1"/>
</dbReference>
<dbReference type="SFLD" id="SFLDS00005">
    <property type="entry name" value="Isoprenoid_Synthase_Type_I"/>
    <property type="match status" value="1"/>
</dbReference>
<dbReference type="SUPFAM" id="SSF48576">
    <property type="entry name" value="Terpenoid synthases"/>
    <property type="match status" value="1"/>
</dbReference>
<dbReference type="PROSITE" id="PS00723">
    <property type="entry name" value="POLYPRENYL_SYNTHASE_1"/>
    <property type="match status" value="1"/>
</dbReference>
<dbReference type="PROSITE" id="PS00444">
    <property type="entry name" value="POLYPRENYL_SYNTHASE_2"/>
    <property type="match status" value="1"/>
</dbReference>
<accession>S0E627</accession>
<organism>
    <name type="scientific">Gibberella fujikuroi (strain CBS 195.34 / IMI 58289 / NRRL A-6831)</name>
    <name type="common">Bakanae and foot rot disease fungus</name>
    <name type="synonym">Fusarium fujikuroi</name>
    <dbReference type="NCBI Taxonomy" id="1279085"/>
    <lineage>
        <taxon>Eukaryota</taxon>
        <taxon>Fungi</taxon>
        <taxon>Dikarya</taxon>
        <taxon>Ascomycota</taxon>
        <taxon>Pezizomycotina</taxon>
        <taxon>Sordariomycetes</taxon>
        <taxon>Hypocreomycetidae</taxon>
        <taxon>Hypocreales</taxon>
        <taxon>Nectriaceae</taxon>
        <taxon>Fusarium</taxon>
        <taxon>Fusarium fujikuroi species complex</taxon>
    </lineage>
</organism>
<sequence>MAEQQISNLLSMFDASHASQKLEITVQMMDTYHYRETPPDSSSSEGGSLSRYDERRVSLPLSHNAASPDIVSQLCFSTAMSSELNHRWKSQRLKVADSPYNYILTLPSKGIRGAFIDSLNVWLEVPEDETSVIKEVIGMLHNSSLIIDDFQDNSPLRRGKPSTHTVFGPAQAINTATYVIVKAIEKIQDIVGHDALADVTGTITTIFQGQAMDLWWTANAIVPSIQEYLLMVNDKTGALFRLSLELLALNSEASISDSALESLSSAVSLLGQYFQIRDDYMNLIDNKYTDQKGFCEDLDEGKYSLTLIHALQTDSSDLLTNILSMRRVQGKLTAQQKMLVLEVMKTNGSLDWTSKLLGMLHTRVVAEIESLEVSTKRDNHALRALVERLKLET</sequence>
<gene>
    <name evidence="12" type="primary">GGS2</name>
    <name type="ORF">FFUJ_14335</name>
</gene>
<name>GA5_GIBF5</name>
<keyword id="KW-0414">Isoprene biosynthesis</keyword>
<keyword id="KW-0460">Magnesium</keyword>
<keyword id="KW-0479">Metal-binding</keyword>
<keyword id="KW-1185">Reference proteome</keyword>
<keyword id="KW-0808">Transferase</keyword>
<evidence type="ECO:0000250" key="1">
    <source>
        <dbReference type="UniProtKB" id="Q12051"/>
    </source>
</evidence>
<evidence type="ECO:0000269" key="2">
    <source>
    </source>
</evidence>
<evidence type="ECO:0000269" key="3">
    <source>
    </source>
</evidence>
<evidence type="ECO:0000269" key="4">
    <source>
    </source>
</evidence>
<evidence type="ECO:0000269" key="5">
    <source>
    </source>
</evidence>
<evidence type="ECO:0000269" key="6">
    <source>
    </source>
</evidence>
<evidence type="ECO:0000269" key="7">
    <source>
    </source>
</evidence>
<evidence type="ECO:0000269" key="8">
    <source>
    </source>
</evidence>
<evidence type="ECO:0000269" key="9">
    <source>
    </source>
</evidence>
<evidence type="ECO:0000269" key="10">
    <source>
    </source>
</evidence>
<evidence type="ECO:0000269" key="11">
    <source>
    </source>
</evidence>
<evidence type="ECO:0000303" key="12">
    <source>
    </source>
</evidence>
<evidence type="ECO:0000305" key="13"/>
<feature type="chain" id="PRO_0000442045" description="Geranylgeranyl pyrophosphate synthase 2">
    <location>
        <begin position="1"/>
        <end position="393"/>
    </location>
</feature>
<feature type="binding site" evidence="1">
    <location>
        <position position="109"/>
    </location>
    <ligand>
        <name>isopentenyl diphosphate</name>
        <dbReference type="ChEBI" id="CHEBI:128769"/>
    </ligand>
</feature>
<feature type="binding site" evidence="1">
    <location>
        <position position="112"/>
    </location>
    <ligand>
        <name>isopentenyl diphosphate</name>
        <dbReference type="ChEBI" id="CHEBI:128769"/>
    </ligand>
</feature>
<feature type="binding site" evidence="1">
    <location>
        <position position="141"/>
    </location>
    <ligand>
        <name>isopentenyl diphosphate</name>
        <dbReference type="ChEBI" id="CHEBI:128769"/>
    </ligand>
</feature>
<feature type="binding site" evidence="1">
    <location>
        <position position="148"/>
    </location>
    <ligand>
        <name>Mg(2+)</name>
        <dbReference type="ChEBI" id="CHEBI:18420"/>
        <label>1</label>
    </ligand>
</feature>
<feature type="binding site" evidence="1">
    <location>
        <position position="148"/>
    </location>
    <ligand>
        <name>Mg(2+)</name>
        <dbReference type="ChEBI" id="CHEBI:18420"/>
        <label>2</label>
    </ligand>
</feature>
<feature type="binding site" evidence="1">
    <location>
        <position position="152"/>
    </location>
    <ligand>
        <name>Mg(2+)</name>
        <dbReference type="ChEBI" id="CHEBI:18420"/>
        <label>1</label>
    </ligand>
</feature>
<feature type="binding site" evidence="1">
    <location>
        <position position="152"/>
    </location>
    <ligand>
        <name>Mg(2+)</name>
        <dbReference type="ChEBI" id="CHEBI:18420"/>
        <label>2</label>
    </ligand>
</feature>
<feature type="binding site" evidence="1">
    <location>
        <position position="157"/>
    </location>
    <ligand>
        <name>dimethylallyl diphosphate</name>
        <dbReference type="ChEBI" id="CHEBI:57623"/>
    </ligand>
</feature>
<feature type="binding site" evidence="1">
    <location>
        <position position="158"/>
    </location>
    <ligand>
        <name>isopentenyl diphosphate</name>
        <dbReference type="ChEBI" id="CHEBI:128769"/>
    </ligand>
</feature>
<feature type="binding site" evidence="1">
    <location>
        <position position="235"/>
    </location>
    <ligand>
        <name>dimethylallyl diphosphate</name>
        <dbReference type="ChEBI" id="CHEBI:57623"/>
    </ligand>
</feature>
<feature type="binding site" evidence="1">
    <location>
        <position position="236"/>
    </location>
    <ligand>
        <name>dimethylallyl diphosphate</name>
        <dbReference type="ChEBI" id="CHEBI:57623"/>
    </ligand>
</feature>
<feature type="binding site" evidence="1">
    <location>
        <position position="275"/>
    </location>
    <ligand>
        <name>dimethylallyl diphosphate</name>
        <dbReference type="ChEBI" id="CHEBI:57623"/>
    </ligand>
</feature>
<feature type="binding site" evidence="1">
    <location>
        <position position="278"/>
    </location>
    <ligand>
        <name>Mg(2+)</name>
        <dbReference type="ChEBI" id="CHEBI:18420"/>
        <label>3</label>
    </ligand>
</feature>
<feature type="binding site" evidence="1">
    <location>
        <position position="282"/>
    </location>
    <ligand>
        <name>dimethylallyl diphosphate</name>
        <dbReference type="ChEBI" id="CHEBI:57623"/>
    </ligand>
</feature>
<feature type="binding site" evidence="1">
    <location>
        <position position="292"/>
    </location>
    <ligand>
        <name>dimethylallyl diphosphate</name>
        <dbReference type="ChEBI" id="CHEBI:57623"/>
    </ligand>
</feature>
<feature type="binding site" evidence="1">
    <location>
        <position position="302"/>
    </location>
    <ligand>
        <name>dimethylallyl diphosphate</name>
        <dbReference type="ChEBI" id="CHEBI:57623"/>
    </ligand>
</feature>
<comment type="function">
    <text evidence="2 3 4 5 6 7 8 9 10 11">Geranylgeranyl pyrophosphate synthase; part of the gene cluster that mediates the biosynthesis of gibberellins (GAs), diterpenoids that may provide a selective advantage during infection of the preferred host plant, rice (PubMed:10347043, PubMed:12750377, PubMed:15925394, PubMed:23825955, PubMed:9917370). Gibberellins (GAs) are diterpenoids and are synthesized via the mevalonate pathway (PubMed:12750377). Biosynthesis of the major metabolite GA3 (gibberellic acid) from geranylgeranyl diphosphate (GGPP) requires 13 steps (PubMed:12750377). The GGPP produced by the geranylgeranyl diphosphate synthase GGS2 is converted to ent-kaurene via ent-copalyldiphosphate in a two-step cyclization reaction performed by the bifunctional ent-copalyl diphosphate synthase/ent-kaurene synthase enzyme (CPS/KS) (PubMed:10803977, PubMed:12750377, PubMed:9745028). Ent-Kaurene is metabolized to GAs by a series of oxidation reactions catalyzed by cytochrome P450 monooxygenases (PubMed:12750377, PubMed:9917370). Cytochrome P450 monooxygenase P450-4 is an ent-kaurene oxidase that catalyzes the three oxidation steps between ent-kaurene and ent-kaurenoic acid (PubMed:11472927). The highly multifunctional cytochrome P450 monooxygenase P450-1 then catalyzes four steps involving oxidation at two carbon atoms, in the main pathway from ent-kaurenoic acid to GA14 via GA12-aldehyde as well as producing kaurenolides and fujenoic acids as by-products (PubMed:11320210). The cytochrome P450 monooxygenase P450-2 then converts GA14 to GA4 by removal of C-20 (PubMed:11943776). GA4 is further converted to GA7 by the GA4 desaturase DES via 1,2-desaturation before cytochrome P450 monooxygenase P450-3, a 13-hydroxylase, hydroxylates GA7 to GA3, the final product of the GA-biosynthetic pathway (PubMed:12750377).</text>
</comment>
<comment type="catalytic activity">
    <reaction evidence="1">
        <text>isopentenyl diphosphate + dimethylallyl diphosphate = (2E)-geranyl diphosphate + diphosphate</text>
        <dbReference type="Rhea" id="RHEA:22408"/>
        <dbReference type="ChEBI" id="CHEBI:33019"/>
        <dbReference type="ChEBI" id="CHEBI:57623"/>
        <dbReference type="ChEBI" id="CHEBI:58057"/>
        <dbReference type="ChEBI" id="CHEBI:128769"/>
        <dbReference type="EC" id="2.5.1.1"/>
    </reaction>
</comment>
<comment type="catalytic activity">
    <reaction evidence="1">
        <text>isopentenyl diphosphate + (2E)-geranyl diphosphate = (2E,6E)-farnesyl diphosphate + diphosphate</text>
        <dbReference type="Rhea" id="RHEA:19361"/>
        <dbReference type="ChEBI" id="CHEBI:33019"/>
        <dbReference type="ChEBI" id="CHEBI:58057"/>
        <dbReference type="ChEBI" id="CHEBI:128769"/>
        <dbReference type="ChEBI" id="CHEBI:175763"/>
        <dbReference type="EC" id="2.5.1.10"/>
    </reaction>
</comment>
<comment type="catalytic activity">
    <reaction evidence="1">
        <text>isopentenyl diphosphate + (2E,6E)-farnesyl diphosphate = (2E,6E,10E)-geranylgeranyl diphosphate + diphosphate</text>
        <dbReference type="Rhea" id="RHEA:17653"/>
        <dbReference type="ChEBI" id="CHEBI:33019"/>
        <dbReference type="ChEBI" id="CHEBI:58756"/>
        <dbReference type="ChEBI" id="CHEBI:128769"/>
        <dbReference type="ChEBI" id="CHEBI:175763"/>
        <dbReference type="EC" id="2.5.1.29"/>
    </reaction>
</comment>
<comment type="cofactor">
    <cofactor evidence="1">
        <name>Mg(2+)</name>
        <dbReference type="ChEBI" id="CHEBI:18420"/>
    </cofactor>
    <text evidence="1">Binds 3 Mg(2+) ions per subunit.</text>
</comment>
<comment type="pathway">
    <text evidence="11">Plant hormone biosynthesis; gibberellin biosynthesis.</text>
</comment>
<comment type="induction">
    <text evidence="11">Expression is induced under gibberellin-producing conditions (PubMed:9917370).</text>
</comment>
<comment type="similarity">
    <text evidence="13">Belongs to the FPP/GGPP synthase family.</text>
</comment>
<reference key="1">
    <citation type="journal article" date="2013" name="PLoS Pathog.">
        <title>Deciphering the cryptic genome: genome-wide analyses of the rice pathogen Fusarium fujikuroi reveal complex regulation of secondary metabolism and novel metabolites.</title>
        <authorList>
            <person name="Wiemann P."/>
            <person name="Sieber C.M.K."/>
            <person name="von Bargen K.W."/>
            <person name="Studt L."/>
            <person name="Niehaus E.-M."/>
            <person name="Espino J.J."/>
            <person name="Huss K."/>
            <person name="Michielse C.B."/>
            <person name="Albermann S."/>
            <person name="Wagner D."/>
            <person name="Bergner S.V."/>
            <person name="Connolly L.R."/>
            <person name="Fischer A."/>
            <person name="Reuter G."/>
            <person name="Kleigrewe K."/>
            <person name="Bald T."/>
            <person name="Wingfield B.D."/>
            <person name="Ophir R."/>
            <person name="Freeman S."/>
            <person name="Hippler M."/>
            <person name="Smith K.M."/>
            <person name="Brown D.W."/>
            <person name="Proctor R.H."/>
            <person name="Muensterkoetter M."/>
            <person name="Freitag M."/>
            <person name="Humpf H.-U."/>
            <person name="Gueldener U."/>
            <person name="Tudzynski B."/>
        </authorList>
    </citation>
    <scope>NUCLEOTIDE SEQUENCE [LARGE SCALE GENOMIC DNA]</scope>
    <scope>FUNCTION</scope>
    <source>
        <strain>CBS 195.34 / IMI 58289 / NRRL A-6831</strain>
    </source>
</reference>
<reference key="2">
    <citation type="journal article" date="1998" name="Curr. Genet.">
        <title>Gibberellin biosynthesis in Gibberella fujikuroi: cloning and characterization of the copalyl diphosphate synthase gene.</title>
        <authorList>
            <person name="Tudzynski B."/>
            <person name="Kawaide H."/>
            <person name="Kamiya Y."/>
        </authorList>
    </citation>
    <scope>FUNCTION</scope>
</reference>
<reference key="3">
    <citation type="journal article" date="1998" name="Fungal Genet. Biol.">
        <title>Gibberellin biosynthetic pathway in Gibberella fujikuroi: evidence for a gene cluster.</title>
        <authorList>
            <person name="Tudzynski B."/>
            <person name="Hoelter K."/>
        </authorList>
    </citation>
    <scope>FUNCTION</scope>
    <scope>INDUCTION</scope>
    <scope>PATHWAY</scope>
</reference>
<reference key="4">
    <citation type="journal article" date="1999" name="Appl. Environ. Microbiol.">
        <title>Deletions in the gibberellin biosynthesis gene cluster of Gibberella fujikuroi by restriction enzyme-mediated integration and conventional transformation-mediated mutagenesis.</title>
        <authorList>
            <person name="Linnemannstoens P."/>
            <person name="Voss T."/>
            <person name="Hedden P."/>
            <person name="Gaskin P."/>
            <person name="Tudzynski B."/>
        </authorList>
    </citation>
    <scope>FUNCTION</scope>
</reference>
<reference key="5">
    <citation type="journal article" date="2000" name="Biosci. Biotechnol. Biochem.">
        <title>Cloning of a full-length cDNA encoding ent-kaurene synthase from Gibberella fujikuroi: functional analysis of a bifunctional diterpene cyclase.</title>
        <authorList>
            <person name="Toyomasu T."/>
            <person name="Kawaide H."/>
            <person name="Ishizaki A."/>
            <person name="Shinoda S."/>
            <person name="Otsuka M."/>
            <person name="Mitsuhashi W."/>
            <person name="Sassa T."/>
        </authorList>
    </citation>
    <scope>FUNCTION</scope>
</reference>
<reference key="6">
    <citation type="journal article" date="2001" name="Appl. Environ. Microbiol.">
        <title>The P450-4 gene of Gibberella fujikuroi encodes ent-kaurene oxidase in the gibberellin biosynthesis pathway.</title>
        <authorList>
            <person name="Tudzynski B."/>
            <person name="Hedden P."/>
            <person name="Carrera E."/>
            <person name="Gaskin P."/>
        </authorList>
    </citation>
    <scope>FUNCTION</scope>
</reference>
<reference key="7">
    <citation type="journal article" date="2001" name="Proc. Natl. Acad. Sci. U.S.A.">
        <title>The P450-1 gene of Gibberella fujikuroi encodes a multifunctional enzyme in gibberellin biosynthesis.</title>
        <authorList>
            <person name="Rojas M.C."/>
            <person name="Hedden P."/>
            <person name="Gaskin P."/>
            <person name="Tudzynski B."/>
        </authorList>
    </citation>
    <scope>FUNCTION</scope>
</reference>
<reference key="8">
    <citation type="journal article" date="2002" name="J. Biol. Chem.">
        <title>The gibberellin 20-oxidase of Gibberella fujikuroi is a multifunctional monooxygenase.</title>
        <authorList>
            <person name="Tudzynski B."/>
            <person name="Rojas M.C."/>
            <person name="Gaskin P."/>
            <person name="Hedden P."/>
        </authorList>
    </citation>
    <scope>FUNCTION</scope>
</reference>
<reference key="9">
    <citation type="journal article" date="2003" name="J. Biol. Chem.">
        <title>Characterization of the final two genes of the gibberellin biosynthesis gene cluster of Gibberella fujikuroi: des and P450-3 encode GA4 desaturase and the 13-hydroxylase, respectively.</title>
        <authorList>
            <person name="Tudzynski B."/>
            <person name="Mihlan M."/>
            <person name="Rojas M.C."/>
            <person name="Linnemannstons P."/>
            <person name="Gaskin P."/>
            <person name="Hedden P."/>
        </authorList>
    </citation>
    <scope>FUNCTION</scope>
</reference>
<reference key="10">
    <citation type="journal article" date="2005" name="Phytochemistry">
        <title>Distribution of gibberellin biosynthetic genes and gibberellin production in the Gibberella fujikuroi species complex.</title>
        <authorList>
            <person name="Malonek S."/>
            <person name="Boemke C."/>
            <person name="Bornberg-Bauer E."/>
            <person name="Rojas M.C."/>
            <person name="Hedden P."/>
            <person name="Hopkins P."/>
            <person name="Tudzynski B."/>
        </authorList>
    </citation>
    <scope>FUNCTION</scope>
</reference>
<protein>
    <recommendedName>
        <fullName evidence="1">Geranylgeranyl pyrophosphate synthase 2</fullName>
        <shortName evidence="13">GGPP synthase 2</shortName>
        <shortName evidence="13">GGPPSase 2</shortName>
        <shortName evidence="12">GGS2</shortName>
        <ecNumber evidence="1">2.5.1.-</ecNumber>
    </recommendedName>
    <alternativeName>
        <fullName evidence="1">(2E,6E)-farnesyl diphosphate synthase</fullName>
    </alternativeName>
    <alternativeName>
        <fullName evidence="1">Dimethylallyltranstransferase</fullName>
        <ecNumber evidence="1">2.5.1.1</ecNumber>
    </alternativeName>
    <alternativeName>
        <fullName evidence="1">Farnesyl diphosphate synthase</fullName>
    </alternativeName>
    <alternativeName>
        <fullName evidence="1">Farnesyltranstransferase</fullName>
        <ecNumber evidence="1">2.5.1.29</ecNumber>
    </alternativeName>
    <alternativeName>
        <fullName evidence="1">Geranylgeranyl diphosphate synthase</fullName>
    </alternativeName>
    <alternativeName>
        <fullName evidence="1">Geranyltranstransferase</fullName>
        <ecNumber evidence="1">2.5.1.10</ecNumber>
    </alternativeName>
    <alternativeName>
        <fullName evidence="13">Gibberellin cluster GGPP synthase</fullName>
    </alternativeName>
</protein>
<proteinExistence type="evidence at transcript level"/>